<accession>F4HTB2</accession>
<dbReference type="EMBL" id="AC024260">
    <property type="status" value="NOT_ANNOTATED_CDS"/>
    <property type="molecule type" value="Genomic_DNA"/>
</dbReference>
<dbReference type="EMBL" id="CP002684">
    <property type="protein sequence ID" value="AEE32986.1"/>
    <property type="status" value="ALT_SEQ"/>
    <property type="molecule type" value="Genomic_DNA"/>
</dbReference>
<dbReference type="EMBL" id="EG420944">
    <property type="status" value="NOT_ANNOTATED_CDS"/>
    <property type="molecule type" value="Genomic_RNA"/>
</dbReference>
<dbReference type="RefSeq" id="NP_001077714.2">
    <property type="nucleotide sequence ID" value="NM_001084245.2"/>
</dbReference>
<dbReference type="PaxDb" id="3702-AT1G53708.1"/>
<dbReference type="GeneID" id="5007802"/>
<dbReference type="KEGG" id="ath:AT1G53708"/>
<dbReference type="Araport" id="AT1G53708"/>
<dbReference type="TAIR" id="AT1G53708"/>
<dbReference type="eggNOG" id="ENOG502S749">
    <property type="taxonomic scope" value="Eukaryota"/>
</dbReference>
<dbReference type="HOGENOM" id="CLU_2187551_0_0_1"/>
<dbReference type="InParanoid" id="F4HTB2"/>
<dbReference type="PRO" id="PR:F4HTB2"/>
<dbReference type="Proteomes" id="UP000006548">
    <property type="component" value="Chromosome 1"/>
</dbReference>
<dbReference type="GO" id="GO:0005886">
    <property type="term" value="C:plasma membrane"/>
    <property type="evidence" value="ECO:0000250"/>
    <property type="project" value="UniProtKB"/>
</dbReference>
<dbReference type="GO" id="GO:0008285">
    <property type="term" value="P:negative regulation of cell population proliferation"/>
    <property type="evidence" value="ECO:0000250"/>
    <property type="project" value="UniProtKB"/>
</dbReference>
<dbReference type="GO" id="GO:0048367">
    <property type="term" value="P:shoot system development"/>
    <property type="evidence" value="ECO:0007669"/>
    <property type="project" value="UniProtKB-ARBA"/>
</dbReference>
<dbReference type="InterPro" id="IPR012552">
    <property type="entry name" value="DVL"/>
</dbReference>
<dbReference type="InterPro" id="IPR051525">
    <property type="entry name" value="DVL_RTFL_regulatory"/>
</dbReference>
<dbReference type="PANTHER" id="PTHR33102">
    <property type="entry name" value="DVL19-RELATED-RELATED"/>
    <property type="match status" value="1"/>
</dbReference>
<dbReference type="Pfam" id="PF08137">
    <property type="entry name" value="DVL"/>
    <property type="match status" value="1"/>
</dbReference>
<protein>
    <recommendedName>
        <fullName evidence="5">Small polypeptide DEVIL 22</fullName>
    </recommendedName>
    <alternativeName>
        <fullName evidence="4">Small polypeptide ROTUNDIFOLIA LIKE 9</fullName>
        <shortName evidence="4">Small polypeptide ROT-FOUR-LIKE 9</shortName>
    </alternativeName>
</protein>
<evidence type="ECO:0000250" key="1">
    <source>
        <dbReference type="UniProtKB" id="Q6X5V0"/>
    </source>
</evidence>
<evidence type="ECO:0000250" key="2">
    <source>
        <dbReference type="UniProtKB" id="Q7XXN8"/>
    </source>
</evidence>
<evidence type="ECO:0000255" key="3"/>
<evidence type="ECO:0000303" key="4">
    <source>
    </source>
</evidence>
<evidence type="ECO:0000305" key="5"/>
<evidence type="ECO:0000312" key="6">
    <source>
        <dbReference type="Araport" id="AT1G53708"/>
    </source>
</evidence>
<evidence type="ECO:0000312" key="7">
    <source>
        <dbReference type="EMBL" id="AC024260"/>
    </source>
</evidence>
<organism>
    <name type="scientific">Arabidopsis thaliana</name>
    <name type="common">Mouse-ear cress</name>
    <dbReference type="NCBI Taxonomy" id="3702"/>
    <lineage>
        <taxon>Eukaryota</taxon>
        <taxon>Viridiplantae</taxon>
        <taxon>Streptophyta</taxon>
        <taxon>Embryophyta</taxon>
        <taxon>Tracheophyta</taxon>
        <taxon>Spermatophyta</taxon>
        <taxon>Magnoliopsida</taxon>
        <taxon>eudicotyledons</taxon>
        <taxon>Gunneridae</taxon>
        <taxon>Pentapetalae</taxon>
        <taxon>rosids</taxon>
        <taxon>malvids</taxon>
        <taxon>Brassicales</taxon>
        <taxon>Brassicaceae</taxon>
        <taxon>Camelineae</taxon>
        <taxon>Arabidopsis</taxon>
    </lineage>
</organism>
<comment type="function">
    <text evidence="1">Small polypeptide acting as a regulatory molecule which coordinates cellular responses required for differentiation, growth and development, probably by restricting polar cell proliferation in lateral organs and coordinating socket cell recruitment and differentiation at trichome sites.</text>
</comment>
<comment type="subcellular location">
    <subcellularLocation>
        <location evidence="2">Cell membrane</location>
        <topology evidence="3">Single-pass membrane protein</topology>
    </subcellularLocation>
</comment>
<comment type="similarity">
    <text evidence="5">Belongs to the DVL/RTFL small polypeptides family.</text>
</comment>
<comment type="sequence caution" evidence="5">
    <conflict type="erroneous gene model prediction">
        <sequence resource="EMBL-CDS" id="AEE32986"/>
    </conflict>
</comment>
<feature type="chain" id="PRO_0000452790" description="Small polypeptide DEVIL 22">
    <location>
        <begin position="1"/>
        <end position="48"/>
    </location>
</feature>
<feature type="transmembrane region" description="Helical" evidence="3">
    <location>
        <begin position="7"/>
        <end position="23"/>
    </location>
</feature>
<feature type="region of interest" description="Required for DVL/RTFL small polypeptide activity" evidence="2">
    <location>
        <begin position="13"/>
        <end position="44"/>
    </location>
</feature>
<gene>
    <name evidence="5" type="primary">DVL22</name>
    <name evidence="4" type="synonym">RTFL9</name>
    <name evidence="6" type="ordered locus">At1g53708</name>
    <name evidence="7" type="ORF">F22G10</name>
</gene>
<proteinExistence type="inferred from homology"/>
<name>DVL22_ARATH</name>
<reference key="1">
    <citation type="journal article" date="2000" name="Nature">
        <title>Sequence and analysis of chromosome 1 of the plant Arabidopsis thaliana.</title>
        <authorList>
            <person name="Theologis A."/>
            <person name="Ecker J.R."/>
            <person name="Palm C.J."/>
            <person name="Federspiel N.A."/>
            <person name="Kaul S."/>
            <person name="White O."/>
            <person name="Alonso J."/>
            <person name="Altafi H."/>
            <person name="Araujo R."/>
            <person name="Bowman C.L."/>
            <person name="Brooks S.Y."/>
            <person name="Buehler E."/>
            <person name="Chan A."/>
            <person name="Chao Q."/>
            <person name="Chen H."/>
            <person name="Cheuk R.F."/>
            <person name="Chin C.W."/>
            <person name="Chung M.K."/>
            <person name="Conn L."/>
            <person name="Conway A.B."/>
            <person name="Conway A.R."/>
            <person name="Creasy T.H."/>
            <person name="Dewar K."/>
            <person name="Dunn P."/>
            <person name="Etgu P."/>
            <person name="Feldblyum T.V."/>
            <person name="Feng J.-D."/>
            <person name="Fong B."/>
            <person name="Fujii C.Y."/>
            <person name="Gill J.E."/>
            <person name="Goldsmith A.D."/>
            <person name="Haas B."/>
            <person name="Hansen N.F."/>
            <person name="Hughes B."/>
            <person name="Huizar L."/>
            <person name="Hunter J.L."/>
            <person name="Jenkins J."/>
            <person name="Johnson-Hopson C."/>
            <person name="Khan S."/>
            <person name="Khaykin E."/>
            <person name="Kim C.J."/>
            <person name="Koo H.L."/>
            <person name="Kremenetskaia I."/>
            <person name="Kurtz D.B."/>
            <person name="Kwan A."/>
            <person name="Lam B."/>
            <person name="Langin-Hooper S."/>
            <person name="Lee A."/>
            <person name="Lee J.M."/>
            <person name="Lenz C.A."/>
            <person name="Li J.H."/>
            <person name="Li Y.-P."/>
            <person name="Lin X."/>
            <person name="Liu S.X."/>
            <person name="Liu Z.A."/>
            <person name="Luros J.S."/>
            <person name="Maiti R."/>
            <person name="Marziali A."/>
            <person name="Militscher J."/>
            <person name="Miranda M."/>
            <person name="Nguyen M."/>
            <person name="Nierman W.C."/>
            <person name="Osborne B.I."/>
            <person name="Pai G."/>
            <person name="Peterson J."/>
            <person name="Pham P.K."/>
            <person name="Rizzo M."/>
            <person name="Rooney T."/>
            <person name="Rowley D."/>
            <person name="Sakano H."/>
            <person name="Salzberg S.L."/>
            <person name="Schwartz J.R."/>
            <person name="Shinn P."/>
            <person name="Southwick A.M."/>
            <person name="Sun H."/>
            <person name="Tallon L.J."/>
            <person name="Tambunga G."/>
            <person name="Toriumi M.J."/>
            <person name="Town C.D."/>
            <person name="Utterback T."/>
            <person name="Van Aken S."/>
            <person name="Vaysberg M."/>
            <person name="Vysotskaia V.S."/>
            <person name="Walker M."/>
            <person name="Wu D."/>
            <person name="Yu G."/>
            <person name="Fraser C.M."/>
            <person name="Venter J.C."/>
            <person name="Davis R.W."/>
        </authorList>
    </citation>
    <scope>NUCLEOTIDE SEQUENCE [LARGE SCALE GENOMIC DNA]</scope>
    <source>
        <strain>cv. Columbia</strain>
    </source>
</reference>
<reference key="2">
    <citation type="journal article" date="2017" name="Plant J.">
        <title>Araport11: a complete reannotation of the Arabidopsis thaliana reference genome.</title>
        <authorList>
            <person name="Cheng C.Y."/>
            <person name="Krishnakumar V."/>
            <person name="Chan A.P."/>
            <person name="Thibaud-Nissen F."/>
            <person name="Schobel S."/>
            <person name="Town C.D."/>
        </authorList>
    </citation>
    <scope>GENOME REANNOTATION</scope>
    <source>
        <strain>cv. Columbia</strain>
    </source>
</reference>
<reference key="3">
    <citation type="journal article" date="2005" name="Plant Physiol.">
        <title>Analysis of the cDNAs of hypothetical genes on Arabidopsis chromosome 2 reveals numerous transcript variants.</title>
        <authorList>
            <person name="Xiao Y.-L."/>
            <person name="Smith S.R."/>
            <person name="Ishmael N."/>
            <person name="Redman J.C."/>
            <person name="Kumar N."/>
            <person name="Monaghan E.L."/>
            <person name="Ayele M."/>
            <person name="Haas B.J."/>
            <person name="Wu H.C."/>
            <person name="Town C.D."/>
        </authorList>
    </citation>
    <scope>NUCLEOTIDE SEQUENCE [LARGE SCALE MRNA]</scope>
    <source>
        <strain>cv. Columbia</strain>
    </source>
</reference>
<reference key="4">
    <citation type="journal article" date="2004" name="Plant J.">
        <title>DVL, a novel class of small polypeptides: overexpression alters Arabidopsis development.</title>
        <authorList>
            <person name="Wen J."/>
            <person name="Lease K.A."/>
            <person name="Walker J.C."/>
        </authorList>
    </citation>
    <scope>GENE FAMILY</scope>
    <scope>NOMENCLATURE</scope>
    <source>
        <strain>cv. Columbia</strain>
    </source>
</reference>
<reference key="5">
    <citation type="journal article" date="2004" name="Plant J.">
        <title>Overexpression of a novel small peptide ROTUNDIFOLIA4 decreases cell proliferation and alters leaf shape in Arabidopsis thaliana.</title>
        <authorList>
            <person name="Narita N.N."/>
            <person name="Moore S."/>
            <person name="Horiguchi G."/>
            <person name="Kubo M."/>
            <person name="Demura T."/>
            <person name="Fukuda H."/>
            <person name="Goodrich J."/>
            <person name="Tsukaya H."/>
        </authorList>
    </citation>
    <scope>GENE FAMILY</scope>
    <source>
        <strain>cv. Columbia</strain>
        <strain>cv. Landsberg erecta</strain>
    </source>
</reference>
<reference key="6">
    <citation type="journal article" date="2015" name="J. Plant Res.">
        <title>Comparative analysis of the RTFL peptide family on the control of plant organogenesis.</title>
        <authorList>
            <person name="Guo P."/>
            <person name="Yoshimura A."/>
            <person name="Ishikawa N."/>
            <person name="Yamaguchi T."/>
            <person name="Guo Y."/>
            <person name="Tsukaya H."/>
        </authorList>
    </citation>
    <scope>REVIEW</scope>
    <scope>GENE FAMILY</scope>
    <scope>NOMENCLATURE</scope>
    <source>
        <strain>cv. Columbia</strain>
    </source>
</reference>
<keyword id="KW-1003">Cell membrane</keyword>
<keyword id="KW-0217">Developmental protein</keyword>
<keyword id="KW-0472">Membrane</keyword>
<keyword id="KW-1185">Reference proteome</keyword>
<keyword id="KW-0812">Transmembrane</keyword>
<keyword id="KW-1133">Transmembrane helix</keyword>
<sequence>MAEFKSKLNKGHAFTSKCASLVKEQRARLYILRRCATMLCCWYIQGDE</sequence>